<gene>
    <name evidence="1" type="primary">bioB</name>
    <name type="ordered locus">Tery_3533</name>
</gene>
<proteinExistence type="inferred from homology"/>
<dbReference type="EC" id="2.8.1.6" evidence="1"/>
<dbReference type="EMBL" id="CP000393">
    <property type="protein sequence ID" value="ABG52621.1"/>
    <property type="molecule type" value="Genomic_DNA"/>
</dbReference>
<dbReference type="RefSeq" id="WP_011612963.1">
    <property type="nucleotide sequence ID" value="NC_008312.1"/>
</dbReference>
<dbReference type="SMR" id="Q10YQ3"/>
<dbReference type="STRING" id="203124.Tery_3533"/>
<dbReference type="KEGG" id="ter:Tery_3533"/>
<dbReference type="eggNOG" id="COG0502">
    <property type="taxonomic scope" value="Bacteria"/>
</dbReference>
<dbReference type="HOGENOM" id="CLU_033172_2_1_3"/>
<dbReference type="UniPathway" id="UPA00078">
    <property type="reaction ID" value="UER00162"/>
</dbReference>
<dbReference type="GO" id="GO:0051537">
    <property type="term" value="F:2 iron, 2 sulfur cluster binding"/>
    <property type="evidence" value="ECO:0007669"/>
    <property type="project" value="UniProtKB-KW"/>
</dbReference>
<dbReference type="GO" id="GO:0051539">
    <property type="term" value="F:4 iron, 4 sulfur cluster binding"/>
    <property type="evidence" value="ECO:0007669"/>
    <property type="project" value="UniProtKB-KW"/>
</dbReference>
<dbReference type="GO" id="GO:0004076">
    <property type="term" value="F:biotin synthase activity"/>
    <property type="evidence" value="ECO:0007669"/>
    <property type="project" value="UniProtKB-UniRule"/>
</dbReference>
<dbReference type="GO" id="GO:0005506">
    <property type="term" value="F:iron ion binding"/>
    <property type="evidence" value="ECO:0007669"/>
    <property type="project" value="UniProtKB-UniRule"/>
</dbReference>
<dbReference type="GO" id="GO:0009102">
    <property type="term" value="P:biotin biosynthetic process"/>
    <property type="evidence" value="ECO:0007669"/>
    <property type="project" value="UniProtKB-UniRule"/>
</dbReference>
<dbReference type="CDD" id="cd01335">
    <property type="entry name" value="Radical_SAM"/>
    <property type="match status" value="1"/>
</dbReference>
<dbReference type="FunFam" id="3.20.20.70:FF:000026">
    <property type="entry name" value="Biotin synthase"/>
    <property type="match status" value="1"/>
</dbReference>
<dbReference type="Gene3D" id="3.20.20.70">
    <property type="entry name" value="Aldolase class I"/>
    <property type="match status" value="1"/>
</dbReference>
<dbReference type="HAMAP" id="MF_01694">
    <property type="entry name" value="BioB"/>
    <property type="match status" value="1"/>
</dbReference>
<dbReference type="InterPro" id="IPR013785">
    <property type="entry name" value="Aldolase_TIM"/>
</dbReference>
<dbReference type="InterPro" id="IPR010722">
    <property type="entry name" value="BATS_dom"/>
</dbReference>
<dbReference type="InterPro" id="IPR002684">
    <property type="entry name" value="Biotin_synth/BioAB"/>
</dbReference>
<dbReference type="InterPro" id="IPR024177">
    <property type="entry name" value="Biotin_synthase"/>
</dbReference>
<dbReference type="InterPro" id="IPR006638">
    <property type="entry name" value="Elp3/MiaA/NifB-like_rSAM"/>
</dbReference>
<dbReference type="InterPro" id="IPR007197">
    <property type="entry name" value="rSAM"/>
</dbReference>
<dbReference type="NCBIfam" id="TIGR00433">
    <property type="entry name" value="bioB"/>
    <property type="match status" value="1"/>
</dbReference>
<dbReference type="PANTHER" id="PTHR22976">
    <property type="entry name" value="BIOTIN SYNTHASE"/>
    <property type="match status" value="1"/>
</dbReference>
<dbReference type="PANTHER" id="PTHR22976:SF2">
    <property type="entry name" value="BIOTIN SYNTHASE, MITOCHONDRIAL"/>
    <property type="match status" value="1"/>
</dbReference>
<dbReference type="Pfam" id="PF06968">
    <property type="entry name" value="BATS"/>
    <property type="match status" value="1"/>
</dbReference>
<dbReference type="Pfam" id="PF04055">
    <property type="entry name" value="Radical_SAM"/>
    <property type="match status" value="1"/>
</dbReference>
<dbReference type="PIRSF" id="PIRSF001619">
    <property type="entry name" value="Biotin_synth"/>
    <property type="match status" value="1"/>
</dbReference>
<dbReference type="SFLD" id="SFLDG01060">
    <property type="entry name" value="BATS_domain_containing"/>
    <property type="match status" value="1"/>
</dbReference>
<dbReference type="SFLD" id="SFLDG01278">
    <property type="entry name" value="biotin_synthase_like"/>
    <property type="match status" value="1"/>
</dbReference>
<dbReference type="SMART" id="SM00876">
    <property type="entry name" value="BATS"/>
    <property type="match status" value="1"/>
</dbReference>
<dbReference type="SMART" id="SM00729">
    <property type="entry name" value="Elp3"/>
    <property type="match status" value="1"/>
</dbReference>
<dbReference type="SUPFAM" id="SSF102114">
    <property type="entry name" value="Radical SAM enzymes"/>
    <property type="match status" value="1"/>
</dbReference>
<dbReference type="PROSITE" id="PS51918">
    <property type="entry name" value="RADICAL_SAM"/>
    <property type="match status" value="1"/>
</dbReference>
<name>BIOB_TRIEI</name>
<evidence type="ECO:0000255" key="1">
    <source>
        <dbReference type="HAMAP-Rule" id="MF_01694"/>
    </source>
</evidence>
<evidence type="ECO:0000255" key="2">
    <source>
        <dbReference type="PROSITE-ProRule" id="PRU01266"/>
    </source>
</evidence>
<protein>
    <recommendedName>
        <fullName evidence="1">Biotin synthase</fullName>
        <ecNumber evidence="1">2.8.1.6</ecNumber>
    </recommendedName>
</protein>
<keyword id="KW-0001">2Fe-2S</keyword>
<keyword id="KW-0004">4Fe-4S</keyword>
<keyword id="KW-0093">Biotin biosynthesis</keyword>
<keyword id="KW-0408">Iron</keyword>
<keyword id="KW-0411">Iron-sulfur</keyword>
<keyword id="KW-0479">Metal-binding</keyword>
<keyword id="KW-0949">S-adenosyl-L-methionine</keyword>
<keyword id="KW-0808">Transferase</keyword>
<accession>Q10YQ3</accession>
<reference key="1">
    <citation type="journal article" date="2015" name="Proc. Natl. Acad. Sci. U.S.A.">
        <title>Trichodesmium genome maintains abundant, widespread noncoding DNA in situ, despite oligotrophic lifestyle.</title>
        <authorList>
            <person name="Walworth N."/>
            <person name="Pfreundt U."/>
            <person name="Nelson W.C."/>
            <person name="Mincer T."/>
            <person name="Heidelberg J.F."/>
            <person name="Fu F."/>
            <person name="Waterbury J.B."/>
            <person name="Glavina del Rio T."/>
            <person name="Goodwin L."/>
            <person name="Kyrpides N.C."/>
            <person name="Land M.L."/>
            <person name="Woyke T."/>
            <person name="Hutchins D.A."/>
            <person name="Hess W.R."/>
            <person name="Webb E.A."/>
        </authorList>
    </citation>
    <scope>NUCLEOTIDE SEQUENCE [LARGE SCALE GENOMIC DNA]</scope>
    <source>
        <strain>IMS101</strain>
    </source>
</reference>
<sequence>MIAVLKTPLSNHIKANTKALFSSLPKTKNELEISLDDLAKQIISGYRLSREEAIILTQIAGEEDILLLCEAADRVRQACCGNVVDLCSIINVKSGGCSENCSFCSQSVHHPGEDSPIYGLKSTEEILDQAKAAEAAGAKRFCLVSQGRGVKYNSPKSTEFEQILGTVRQILAETNIKPCCALGELTPEQAQALAEAGVTRYNHNLEASEHFYPEIVSTHSWNDRVETVKNLKAAGIQACTGGIIGMGETWADRIDLALALRELEVESVPLNLLNSREGTPLGGLLKLDPYDALKAIAIFRLILPKQIIRYAGGREAVMGDLQALGLKAGINAMLIGHYLTTLGQPPEKDQAMLKSLGLQGGETPIATNGL</sequence>
<comment type="function">
    <text evidence="1">Catalyzes the conversion of dethiobiotin (DTB) to biotin by the insertion of a sulfur atom into dethiobiotin via a radical-based mechanism.</text>
</comment>
<comment type="catalytic activity">
    <reaction evidence="1">
        <text>(4R,5S)-dethiobiotin + (sulfur carrier)-SH + 2 reduced [2Fe-2S]-[ferredoxin] + 2 S-adenosyl-L-methionine = (sulfur carrier)-H + biotin + 2 5'-deoxyadenosine + 2 L-methionine + 2 oxidized [2Fe-2S]-[ferredoxin]</text>
        <dbReference type="Rhea" id="RHEA:22060"/>
        <dbReference type="Rhea" id="RHEA-COMP:10000"/>
        <dbReference type="Rhea" id="RHEA-COMP:10001"/>
        <dbReference type="Rhea" id="RHEA-COMP:14737"/>
        <dbReference type="Rhea" id="RHEA-COMP:14739"/>
        <dbReference type="ChEBI" id="CHEBI:17319"/>
        <dbReference type="ChEBI" id="CHEBI:29917"/>
        <dbReference type="ChEBI" id="CHEBI:33737"/>
        <dbReference type="ChEBI" id="CHEBI:33738"/>
        <dbReference type="ChEBI" id="CHEBI:57586"/>
        <dbReference type="ChEBI" id="CHEBI:57844"/>
        <dbReference type="ChEBI" id="CHEBI:59789"/>
        <dbReference type="ChEBI" id="CHEBI:64428"/>
        <dbReference type="ChEBI" id="CHEBI:149473"/>
        <dbReference type="EC" id="2.8.1.6"/>
    </reaction>
</comment>
<comment type="cofactor">
    <cofactor evidence="1">
        <name>[4Fe-4S] cluster</name>
        <dbReference type="ChEBI" id="CHEBI:49883"/>
    </cofactor>
    <text evidence="1">Binds 1 [4Fe-4S] cluster. The cluster is coordinated with 3 cysteines and an exchangeable S-adenosyl-L-methionine.</text>
</comment>
<comment type="cofactor">
    <cofactor evidence="1">
        <name>[2Fe-2S] cluster</name>
        <dbReference type="ChEBI" id="CHEBI:190135"/>
    </cofactor>
    <text evidence="1">Binds 1 [2Fe-2S] cluster. The cluster is coordinated with 3 cysteines and 1 arginine.</text>
</comment>
<comment type="pathway">
    <text evidence="1">Cofactor biosynthesis; biotin biosynthesis; biotin from 7,8-diaminononanoate: step 2/2.</text>
</comment>
<comment type="subunit">
    <text evidence="1">Homodimer.</text>
</comment>
<comment type="similarity">
    <text evidence="1">Belongs to the radical SAM superfamily. Biotin synthase family.</text>
</comment>
<feature type="chain" id="PRO_0000381692" description="Biotin synthase">
    <location>
        <begin position="1"/>
        <end position="370"/>
    </location>
</feature>
<feature type="domain" description="Radical SAM core" evidence="2">
    <location>
        <begin position="79"/>
        <end position="314"/>
    </location>
</feature>
<feature type="binding site" evidence="1">
    <location>
        <position position="97"/>
    </location>
    <ligand>
        <name>[4Fe-4S] cluster</name>
        <dbReference type="ChEBI" id="CHEBI:49883"/>
        <note>4Fe-4S-S-AdoMet</note>
    </ligand>
</feature>
<feature type="binding site" evidence="1">
    <location>
        <position position="101"/>
    </location>
    <ligand>
        <name>[4Fe-4S] cluster</name>
        <dbReference type="ChEBI" id="CHEBI:49883"/>
        <note>4Fe-4S-S-AdoMet</note>
    </ligand>
</feature>
<feature type="binding site" evidence="1">
    <location>
        <position position="104"/>
    </location>
    <ligand>
        <name>[4Fe-4S] cluster</name>
        <dbReference type="ChEBI" id="CHEBI:49883"/>
        <note>4Fe-4S-S-AdoMet</note>
    </ligand>
</feature>
<feature type="binding site" evidence="1">
    <location>
        <position position="142"/>
    </location>
    <ligand>
        <name>[2Fe-2S] cluster</name>
        <dbReference type="ChEBI" id="CHEBI:190135"/>
    </ligand>
</feature>
<feature type="binding site" evidence="1">
    <location>
        <position position="179"/>
    </location>
    <ligand>
        <name>[2Fe-2S] cluster</name>
        <dbReference type="ChEBI" id="CHEBI:190135"/>
    </ligand>
</feature>
<feature type="binding site" evidence="1">
    <location>
        <position position="239"/>
    </location>
    <ligand>
        <name>[2Fe-2S] cluster</name>
        <dbReference type="ChEBI" id="CHEBI:190135"/>
    </ligand>
</feature>
<feature type="binding site" evidence="1">
    <location>
        <position position="309"/>
    </location>
    <ligand>
        <name>[2Fe-2S] cluster</name>
        <dbReference type="ChEBI" id="CHEBI:190135"/>
    </ligand>
</feature>
<organism>
    <name type="scientific">Trichodesmium erythraeum (strain IMS101)</name>
    <dbReference type="NCBI Taxonomy" id="203124"/>
    <lineage>
        <taxon>Bacteria</taxon>
        <taxon>Bacillati</taxon>
        <taxon>Cyanobacteriota</taxon>
        <taxon>Cyanophyceae</taxon>
        <taxon>Oscillatoriophycideae</taxon>
        <taxon>Oscillatoriales</taxon>
        <taxon>Microcoleaceae</taxon>
        <taxon>Trichodesmium</taxon>
    </lineage>
</organism>